<gene>
    <name type="primary">MT-ATP8</name>
    <name type="synonym">ATP8</name>
    <name type="synonym">ATPASE8</name>
    <name type="synonym">MTATP8</name>
</gene>
<sequence>MPQMMPLPWIMVFLVSMALLWAIMTMVFFLYQPRSVSSAKGFSDRTVYLNWKW</sequence>
<reference key="1">
    <citation type="journal article" date="1994" name="J. Mol. Evol.">
        <title>Speciation in the Artemia genus: mitochondrial DNA analysis of bisexual and parthenogenetic brine shrimps.</title>
        <authorList>
            <person name="Perez M.L."/>
            <person name="Valverde J.R."/>
            <person name="Batuecas B."/>
            <person name="Amat F."/>
            <person name="Marco R."/>
            <person name="Garesse R."/>
        </authorList>
    </citation>
    <scope>NUCLEOTIDE SEQUENCE [GENOMIC DNA]</scope>
</reference>
<accession>Q37707</accession>
<proteinExistence type="inferred from homology"/>
<evidence type="ECO:0000250" key="1"/>
<evidence type="ECO:0000255" key="2"/>
<evidence type="ECO:0000305" key="3"/>
<protein>
    <recommendedName>
        <fullName>ATP synthase protein 8</fullName>
    </recommendedName>
    <alternativeName>
        <fullName>A6L</fullName>
    </alternativeName>
    <alternativeName>
        <fullName>F-ATPase subunit 8</fullName>
    </alternativeName>
</protein>
<feature type="chain" id="PRO_0000195489" description="ATP synthase protein 8">
    <location>
        <begin position="1"/>
        <end position="53"/>
    </location>
</feature>
<feature type="transmembrane region" description="Helical" evidence="2">
    <location>
        <begin position="10"/>
        <end position="30"/>
    </location>
</feature>
<dbReference type="EMBL" id="X69067">
    <property type="protein sequence ID" value="CAA48808.1"/>
    <property type="molecule type" value="Genomic_DNA"/>
</dbReference>
<dbReference type="PIR" id="S60640">
    <property type="entry name" value="S60640"/>
</dbReference>
<dbReference type="RefSeq" id="NP_007111.1">
    <property type="nucleotide sequence ID" value="NC_001620.1"/>
</dbReference>
<dbReference type="SMR" id="Q37707"/>
<dbReference type="GeneID" id="807796"/>
<dbReference type="KEGG" id="afra:807796"/>
<dbReference type="CTD" id="4509"/>
<dbReference type="GO" id="GO:0031966">
    <property type="term" value="C:mitochondrial membrane"/>
    <property type="evidence" value="ECO:0007669"/>
    <property type="project" value="UniProtKB-SubCell"/>
</dbReference>
<dbReference type="GO" id="GO:0045259">
    <property type="term" value="C:proton-transporting ATP synthase complex"/>
    <property type="evidence" value="ECO:0007669"/>
    <property type="project" value="UniProtKB-KW"/>
</dbReference>
<dbReference type="GO" id="GO:0006754">
    <property type="term" value="P:ATP biosynthetic process"/>
    <property type="evidence" value="ECO:0007669"/>
    <property type="project" value="UniProtKB-KW"/>
</dbReference>
<dbReference type="GO" id="GO:1902600">
    <property type="term" value="P:proton transmembrane transport"/>
    <property type="evidence" value="ECO:0007669"/>
    <property type="project" value="UniProtKB-KW"/>
</dbReference>
<organism>
    <name type="scientific">Artemia franciscana</name>
    <name type="common">Brine shrimp</name>
    <name type="synonym">Artemia sanfranciscana</name>
    <dbReference type="NCBI Taxonomy" id="6661"/>
    <lineage>
        <taxon>Eukaryota</taxon>
        <taxon>Metazoa</taxon>
        <taxon>Ecdysozoa</taxon>
        <taxon>Arthropoda</taxon>
        <taxon>Crustacea</taxon>
        <taxon>Branchiopoda</taxon>
        <taxon>Anostraca</taxon>
        <taxon>Artemiidae</taxon>
        <taxon>Artemia</taxon>
    </lineage>
</organism>
<keyword id="KW-0066">ATP synthesis</keyword>
<keyword id="KW-0138">CF(0)</keyword>
<keyword id="KW-0375">Hydrogen ion transport</keyword>
<keyword id="KW-0406">Ion transport</keyword>
<keyword id="KW-0472">Membrane</keyword>
<keyword id="KW-0496">Mitochondrion</keyword>
<keyword id="KW-0812">Transmembrane</keyword>
<keyword id="KW-1133">Transmembrane helix</keyword>
<keyword id="KW-0813">Transport</keyword>
<name>ATP8_ARTSF</name>
<geneLocation type="mitochondrion"/>
<comment type="function">
    <text evidence="1">Mitochondrial membrane ATP synthase (F(1)F(0) ATP synthase or Complex V) produces ATP from ADP in the presence of a proton gradient across the membrane which is generated by electron transport complexes of the respiratory chain. F-type ATPases consist of two structural domains, F(1) - containing the extramembraneous catalytic core and F(0) - containing the membrane proton channel, linked together by a central stalk and a peripheral stalk. During catalysis, ATP synthesis in the catalytic domain of F(1) is coupled via a rotary mechanism of the central stalk subunits to proton translocation. Part of the complex F(0) domain. Minor subunit located with subunit a in the membrane (By similarity).</text>
</comment>
<comment type="subunit">
    <text evidence="1">F-type ATPases have 2 components, CF(1) - the catalytic core - and CF(0) - the membrane proton channel.</text>
</comment>
<comment type="subcellular location">
    <subcellularLocation>
        <location>Mitochondrion membrane</location>
        <topology>Single-pass membrane protein</topology>
    </subcellularLocation>
</comment>
<comment type="similarity">
    <text evidence="3">Belongs to the ATPase protein 8 family.</text>
</comment>